<protein>
    <recommendedName>
        <fullName>DNA replication regulator SLD2</fullName>
    </recommendedName>
</protein>
<name>SLD2_YARLI</name>
<proteinExistence type="inferred from homology"/>
<gene>
    <name type="primary">SLD2</name>
    <name type="ordered locus">YALI0E01650g</name>
</gene>
<dbReference type="EMBL" id="CR382131">
    <property type="protein sequence ID" value="CAG79004.1"/>
    <property type="molecule type" value="Genomic_DNA"/>
</dbReference>
<dbReference type="RefSeq" id="XP_503425.1">
    <property type="nucleotide sequence ID" value="XM_503425.1"/>
</dbReference>
<dbReference type="SMR" id="Q6C7D7"/>
<dbReference type="STRING" id="284591.Q6C7D7"/>
<dbReference type="EnsemblFungi" id="CAG79004">
    <property type="protein sequence ID" value="CAG79004"/>
    <property type="gene ID" value="YALI0_E01650g"/>
</dbReference>
<dbReference type="KEGG" id="yli:2912047"/>
<dbReference type="VEuPathDB" id="FungiDB:YALI0_E01650g"/>
<dbReference type="HOGENOM" id="CLU_708235_0_0_1"/>
<dbReference type="InParanoid" id="Q6C7D7"/>
<dbReference type="OrthoDB" id="115833at4891"/>
<dbReference type="Proteomes" id="UP000001300">
    <property type="component" value="Chromosome E"/>
</dbReference>
<dbReference type="GO" id="GO:0005737">
    <property type="term" value="C:cytoplasm"/>
    <property type="evidence" value="ECO:0007669"/>
    <property type="project" value="UniProtKB-SubCell"/>
</dbReference>
<dbReference type="GO" id="GO:0031261">
    <property type="term" value="C:DNA replication preinitiation complex"/>
    <property type="evidence" value="ECO:0000318"/>
    <property type="project" value="GO_Central"/>
</dbReference>
<dbReference type="GO" id="GO:0003688">
    <property type="term" value="F:DNA replication origin binding"/>
    <property type="evidence" value="ECO:0000318"/>
    <property type="project" value="GO_Central"/>
</dbReference>
<dbReference type="GO" id="GO:0003697">
    <property type="term" value="F:single-stranded DNA binding"/>
    <property type="evidence" value="ECO:0000318"/>
    <property type="project" value="GO_Central"/>
</dbReference>
<dbReference type="GO" id="GO:0006270">
    <property type="term" value="P:DNA replication initiation"/>
    <property type="evidence" value="ECO:0000318"/>
    <property type="project" value="GO_Central"/>
</dbReference>
<dbReference type="GO" id="GO:0000727">
    <property type="term" value="P:double-strand break repair via break-induced replication"/>
    <property type="evidence" value="ECO:0000318"/>
    <property type="project" value="GO_Central"/>
</dbReference>
<dbReference type="GO" id="GO:1902977">
    <property type="term" value="P:mitotic DNA replication preinitiation complex assembly"/>
    <property type="evidence" value="ECO:0000318"/>
    <property type="project" value="GO_Central"/>
</dbReference>
<dbReference type="CDD" id="cd22289">
    <property type="entry name" value="RecQL4_SLD2_NTD"/>
    <property type="match status" value="1"/>
</dbReference>
<dbReference type="Gene3D" id="1.10.10.1460">
    <property type="match status" value="1"/>
</dbReference>
<dbReference type="InterPro" id="IPR021110">
    <property type="entry name" value="DNA_rep_checkpnt_protein"/>
</dbReference>
<dbReference type="InterPro" id="IPR040203">
    <property type="entry name" value="Sld2"/>
</dbReference>
<dbReference type="PANTHER" id="PTHR28124">
    <property type="entry name" value="DNA REPLICATION REGULATOR SLD2"/>
    <property type="match status" value="1"/>
</dbReference>
<dbReference type="PANTHER" id="PTHR28124:SF1">
    <property type="entry name" value="DNA REPLICATION REGULATOR SLD2"/>
    <property type="match status" value="1"/>
</dbReference>
<dbReference type="Pfam" id="PF11719">
    <property type="entry name" value="Drc1-Sld2"/>
    <property type="match status" value="2"/>
</dbReference>
<evidence type="ECO:0000250" key="1"/>
<evidence type="ECO:0000256" key="2">
    <source>
        <dbReference type="SAM" id="MobiDB-lite"/>
    </source>
</evidence>
<evidence type="ECO:0000305" key="3"/>
<accession>Q6C7D7</accession>
<reference key="1">
    <citation type="journal article" date="2004" name="Nature">
        <title>Genome evolution in yeasts.</title>
        <authorList>
            <person name="Dujon B."/>
            <person name="Sherman D."/>
            <person name="Fischer G."/>
            <person name="Durrens P."/>
            <person name="Casaregola S."/>
            <person name="Lafontaine I."/>
            <person name="de Montigny J."/>
            <person name="Marck C."/>
            <person name="Neuveglise C."/>
            <person name="Talla E."/>
            <person name="Goffard N."/>
            <person name="Frangeul L."/>
            <person name="Aigle M."/>
            <person name="Anthouard V."/>
            <person name="Babour A."/>
            <person name="Barbe V."/>
            <person name="Barnay S."/>
            <person name="Blanchin S."/>
            <person name="Beckerich J.-M."/>
            <person name="Beyne E."/>
            <person name="Bleykasten C."/>
            <person name="Boisrame A."/>
            <person name="Boyer J."/>
            <person name="Cattolico L."/>
            <person name="Confanioleri F."/>
            <person name="de Daruvar A."/>
            <person name="Despons L."/>
            <person name="Fabre E."/>
            <person name="Fairhead C."/>
            <person name="Ferry-Dumazet H."/>
            <person name="Groppi A."/>
            <person name="Hantraye F."/>
            <person name="Hennequin C."/>
            <person name="Jauniaux N."/>
            <person name="Joyet P."/>
            <person name="Kachouri R."/>
            <person name="Kerrest A."/>
            <person name="Koszul R."/>
            <person name="Lemaire M."/>
            <person name="Lesur I."/>
            <person name="Ma L."/>
            <person name="Muller H."/>
            <person name="Nicaud J.-M."/>
            <person name="Nikolski M."/>
            <person name="Oztas S."/>
            <person name="Ozier-Kalogeropoulos O."/>
            <person name="Pellenz S."/>
            <person name="Potier S."/>
            <person name="Richard G.-F."/>
            <person name="Straub M.-L."/>
            <person name="Suleau A."/>
            <person name="Swennen D."/>
            <person name="Tekaia F."/>
            <person name="Wesolowski-Louvel M."/>
            <person name="Westhof E."/>
            <person name="Wirth B."/>
            <person name="Zeniou-Meyer M."/>
            <person name="Zivanovic Y."/>
            <person name="Bolotin-Fukuhara M."/>
            <person name="Thierry A."/>
            <person name="Bouchier C."/>
            <person name="Caudron B."/>
            <person name="Scarpelli C."/>
            <person name="Gaillardin C."/>
            <person name="Weissenbach J."/>
            <person name="Wincker P."/>
            <person name="Souciet J.-L."/>
        </authorList>
    </citation>
    <scope>NUCLEOTIDE SEQUENCE [LARGE SCALE GENOMIC DNA]</scope>
    <source>
        <strain>CLIB 122 / E 150</strain>
    </source>
</reference>
<sequence length="390" mass="43731">MDIQTLRSEIKAWERAYADKHGRKPTPKEVKADPIAKKYHLYNKFKKAESAGTGPSTPKRASKLHSSLNYKPVSFSVKTPEKQISKNRRRSVSKQQHADIVTPSHRSLTFSKAPALSRTPQKQLQDTPKAATPKPSPSVPLGPTPSIHGRVVSLLEGLDGTPVKEFATPGNVSTPVKVVSITSETPTNKPALDVNDEFTTPAYLNRISVDVSPFEKRLSFAERIRQSVVESPIKQMSPEKELSPANQTEEYDDDEDAWRELEGLPPKPKEPKIVDVTFDGEEPDELDEIMGTVEVHNPYDEPVQDDLDWVHETALEGETALSAPIYKEGGIKKRKHQTQKRTTKKAIVRVESEQHKKAKVDNDNFSTTNRLNTGFKVNMGQKQWASRFKK</sequence>
<feature type="chain" id="PRO_0000278439" description="DNA replication regulator SLD2">
    <location>
        <begin position="1"/>
        <end position="390"/>
    </location>
</feature>
<feature type="region of interest" description="Disordered" evidence="2">
    <location>
        <begin position="46"/>
        <end position="148"/>
    </location>
</feature>
<feature type="region of interest" description="Disordered" evidence="2">
    <location>
        <begin position="232"/>
        <end position="256"/>
    </location>
</feature>
<feature type="region of interest" description="Disordered" evidence="2">
    <location>
        <begin position="353"/>
        <end position="372"/>
    </location>
</feature>
<feature type="compositionally biased region" description="Pro residues" evidence="2">
    <location>
        <begin position="134"/>
        <end position="143"/>
    </location>
</feature>
<feature type="compositionally biased region" description="Basic and acidic residues" evidence="2">
    <location>
        <begin position="353"/>
        <end position="362"/>
    </location>
</feature>
<feature type="compositionally biased region" description="Polar residues" evidence="2">
    <location>
        <begin position="363"/>
        <end position="372"/>
    </location>
</feature>
<keyword id="KW-0131">Cell cycle</keyword>
<keyword id="KW-0963">Cytoplasm</keyword>
<keyword id="KW-0235">DNA replication</keyword>
<keyword id="KW-0539">Nucleus</keyword>
<keyword id="KW-1185">Reference proteome</keyword>
<organism>
    <name type="scientific">Yarrowia lipolytica (strain CLIB 122 / E 150)</name>
    <name type="common">Yeast</name>
    <name type="synonym">Candida lipolytica</name>
    <dbReference type="NCBI Taxonomy" id="284591"/>
    <lineage>
        <taxon>Eukaryota</taxon>
        <taxon>Fungi</taxon>
        <taxon>Dikarya</taxon>
        <taxon>Ascomycota</taxon>
        <taxon>Saccharomycotina</taxon>
        <taxon>Dipodascomycetes</taxon>
        <taxon>Dipodascales</taxon>
        <taxon>Dipodascales incertae sedis</taxon>
        <taxon>Yarrowia</taxon>
    </lineage>
</organism>
<comment type="function">
    <text evidence="1">Has a role in the initiation of DNA replication. Required at S-phase checkpoint (By similarity).</text>
</comment>
<comment type="subcellular location">
    <subcellularLocation>
        <location>Cytoplasm</location>
    </subcellularLocation>
    <subcellularLocation>
        <location evidence="1">Nucleus</location>
    </subcellularLocation>
</comment>
<comment type="similarity">
    <text evidence="3">Belongs to the SLD2 family.</text>
</comment>